<organism>
    <name type="scientific">Human immunodeficiency virus type 1 group M subtype J (isolate SE9280)</name>
    <name type="common">HIV-1</name>
    <dbReference type="NCBI Taxonomy" id="388905"/>
    <lineage>
        <taxon>Viruses</taxon>
        <taxon>Riboviria</taxon>
        <taxon>Pararnavirae</taxon>
        <taxon>Artverviricota</taxon>
        <taxon>Revtraviricetes</taxon>
        <taxon>Ortervirales</taxon>
        <taxon>Retroviridae</taxon>
        <taxon>Orthoretrovirinae</taxon>
        <taxon>Lentivirus</taxon>
        <taxon>Human immunodeficiency virus type 1</taxon>
    </lineage>
</organism>
<protein>
    <recommendedName>
        <fullName>Gag polyprotein</fullName>
    </recommendedName>
    <alternativeName>
        <fullName>Pr55Gag</fullName>
    </alternativeName>
    <component>
        <recommendedName>
            <fullName>Matrix protein p17</fullName>
            <shortName>MA</shortName>
        </recommendedName>
    </component>
    <component>
        <recommendedName>
            <fullName>Capsid protein p24</fullName>
            <shortName>CA</shortName>
        </recommendedName>
    </component>
    <component>
        <recommendedName>
            <fullName evidence="6">Spacer peptide 1</fullName>
            <shortName>SP1</shortName>
        </recommendedName>
        <alternativeName>
            <fullName>p2</fullName>
        </alternativeName>
    </component>
    <component>
        <recommendedName>
            <fullName>Nucleocapsid protein p7</fullName>
            <shortName>NC</shortName>
        </recommendedName>
    </component>
    <component>
        <recommendedName>
            <fullName evidence="6">Spacer peptide 2</fullName>
            <shortName>SP2</shortName>
        </recommendedName>
        <alternativeName>
            <fullName>p1</fullName>
        </alternativeName>
    </component>
    <component>
        <recommendedName>
            <fullName>p6-gag</fullName>
        </recommendedName>
    </component>
</protein>
<organismHost>
    <name type="scientific">Homo sapiens</name>
    <name type="common">Human</name>
    <dbReference type="NCBI Taxonomy" id="9606"/>
</organismHost>
<sequence>MGARASILSGGKLDDWEKIRLRPGGKKKYRIKHLVWASRELDRFALNPGLLESAKGCQQILVQLQPALQTGTQEIKSLYNTVATLYCVHQRIEIKDTMEALEKIEEIQNKNKQQAQKAETDKKDNSQVSQNYPIVQNLQGQPVHQALSPRTLNAWVKVIEEKAFSPEVIPMFSALSEGATPQDLNTMLNTIGGHQAAMQMLKDTINEEAAEWDRVHPVHAGPIAPGQVREPRGSDIAGTTSTLQEQIGWMTGNPPIPVGEIYKRWIILGLNKIVRMYSPVSILDIRQGPKEPFRDYVDRFFKALRAEQATQDVKNWMTDTLLVQNANPDCKTILKALGSGATLEEMMTACQGVGGPGHKARVLAEAMSQVTNTNIMMQRGNFRDHKRIVKCFNCGKQGHIAKNCRAPRKKGCWKCGKEGHQMKDCTERQANFLGKIWPSSKGRPGNFLQSRPEPTAPPAESLGLGEEIPSPKQEPKDKELYPLTSLKSLFGSDPLSQ</sequence>
<gene>
    <name type="primary">gag</name>
</gene>
<feature type="initiator methionine" description="Removed; by host" evidence="1">
    <location>
        <position position="1"/>
    </location>
</feature>
<feature type="chain" id="PRO_0000261231" description="Gag polyprotein">
    <location>
        <begin position="2"/>
        <end position="497"/>
    </location>
</feature>
<feature type="chain" id="PRO_0000246404" description="Matrix protein p17" evidence="1">
    <location>
        <begin position="2"/>
        <end position="132"/>
    </location>
</feature>
<feature type="chain" id="PRO_0000246405" description="Capsid protein p24" evidence="1">
    <location>
        <begin position="133"/>
        <end position="363"/>
    </location>
</feature>
<feature type="peptide" id="PRO_0000246406" description="Spacer peptide 1" evidence="1">
    <location>
        <begin position="364"/>
        <end position="376"/>
    </location>
</feature>
<feature type="chain" id="PRO_0000246407" description="Nucleocapsid protein p7" evidence="1">
    <location>
        <begin position="377"/>
        <end position="431"/>
    </location>
</feature>
<feature type="peptide" id="PRO_0000246408" description="Spacer peptide 2" evidence="1">
    <location>
        <begin position="432"/>
        <end position="447"/>
    </location>
</feature>
<feature type="chain" id="PRO_0000246409" description="p6-gag" evidence="1">
    <location>
        <begin position="448"/>
        <end position="497"/>
    </location>
</feature>
<feature type="zinc finger region" description="CCHC-type 1" evidence="8">
    <location>
        <begin position="389"/>
        <end position="406"/>
    </location>
</feature>
<feature type="zinc finger region" description="CCHC-type 2" evidence="8">
    <location>
        <begin position="410"/>
        <end position="427"/>
    </location>
</feature>
<feature type="region of interest" description="Interaction with Gp41" evidence="6">
    <location>
        <begin position="7"/>
        <end position="31"/>
    </location>
</feature>
<feature type="region of interest" description="Interaction with host CALM1" evidence="5">
    <location>
        <begin position="8"/>
        <end position="43"/>
    </location>
</feature>
<feature type="region of interest" description="Interaction with host AP3D1" evidence="7">
    <location>
        <begin position="12"/>
        <end position="19"/>
    </location>
</feature>
<feature type="region of interest" description="Interaction with membrane phosphatidylinositol 4,5-bisphosphate and RNA" evidence="6">
    <location>
        <begin position="14"/>
        <end position="33"/>
    </location>
</feature>
<feature type="region of interest" description="Interaction with membrane phosphatidylinositol 4,5-bisphosphate" evidence="6">
    <location>
        <begin position="73"/>
        <end position="77"/>
    </location>
</feature>
<feature type="region of interest" description="Interaction with host PPIA/CYPA and NUP153" evidence="6">
    <location>
        <begin position="189"/>
        <end position="227"/>
    </location>
</feature>
<feature type="region of interest" description="PPIA/CYPA-binding loop" evidence="5">
    <location>
        <begin position="217"/>
        <end position="225"/>
    </location>
</feature>
<feature type="region of interest" description="Dimerization/Multimerization of capsid protein p24" evidence="5">
    <location>
        <begin position="277"/>
        <end position="363"/>
    </location>
</feature>
<feature type="region of interest" description="Disordered" evidence="9">
    <location>
        <begin position="436"/>
        <end position="497"/>
    </location>
</feature>
<feature type="short sequence motif" description="Nuclear export signal" evidence="1">
    <location>
        <begin position="16"/>
        <end position="22"/>
    </location>
</feature>
<feature type="short sequence motif" description="Nuclear localization signal" evidence="1">
    <location>
        <begin position="26"/>
        <end position="32"/>
    </location>
</feature>
<feature type="short sequence motif" description="PTAP/PSAP motif">
    <location>
        <begin position="454"/>
        <end position="457"/>
    </location>
</feature>
<feature type="short sequence motif" description="LYPX(n)L motif">
    <location>
        <begin position="480"/>
        <end position="489"/>
    </location>
</feature>
<feature type="site" description="Cleavage; by viral protease" evidence="1">
    <location>
        <begin position="132"/>
        <end position="133"/>
    </location>
</feature>
<feature type="site" description="Cleavage; by viral protease" evidence="1">
    <location>
        <begin position="363"/>
        <end position="364"/>
    </location>
</feature>
<feature type="site" description="Cleavage; by viral protease" evidence="1">
    <location>
        <begin position="376"/>
        <end position="377"/>
    </location>
</feature>
<feature type="site" description="Cleavage; by viral protease" evidence="1">
    <location>
        <begin position="431"/>
        <end position="432"/>
    </location>
</feature>
<feature type="site" description="Cleavage; by viral protease" evidence="1">
    <location>
        <begin position="447"/>
        <end position="448"/>
    </location>
</feature>
<feature type="modified residue" description="Phosphoserine; by host MAPK1" evidence="6">
    <location>
        <position position="148"/>
    </location>
</feature>
<feature type="modified residue" description="Asymmetric dimethylarginine; in Nucleocapsid protein p7; by host PRMT6" evidence="1">
    <location>
        <position position="408"/>
    </location>
</feature>
<feature type="lipid moiety-binding region" description="N-myristoyl glycine; by host" evidence="1">
    <location>
        <position position="2"/>
    </location>
</feature>
<proteinExistence type="inferred from homology"/>
<dbReference type="EMBL" id="AF082394">
    <property type="protein sequence ID" value="AAD17756.1"/>
    <property type="molecule type" value="Genomic_DNA"/>
</dbReference>
<dbReference type="SMR" id="Q9WC53"/>
<dbReference type="PRO" id="PR:Q9WC53"/>
<dbReference type="Proteomes" id="UP000135310">
    <property type="component" value="Segment"/>
</dbReference>
<dbReference type="GO" id="GO:0042025">
    <property type="term" value="C:host cell nucleus"/>
    <property type="evidence" value="ECO:0007669"/>
    <property type="project" value="UniProtKB-SubCell"/>
</dbReference>
<dbReference type="GO" id="GO:0020002">
    <property type="term" value="C:host cell plasma membrane"/>
    <property type="evidence" value="ECO:0007669"/>
    <property type="project" value="UniProtKB-SubCell"/>
</dbReference>
<dbReference type="GO" id="GO:0072494">
    <property type="term" value="C:host multivesicular body"/>
    <property type="evidence" value="ECO:0007669"/>
    <property type="project" value="UniProtKB-SubCell"/>
</dbReference>
<dbReference type="GO" id="GO:0016020">
    <property type="term" value="C:membrane"/>
    <property type="evidence" value="ECO:0007669"/>
    <property type="project" value="UniProtKB-KW"/>
</dbReference>
<dbReference type="GO" id="GO:0019013">
    <property type="term" value="C:viral nucleocapsid"/>
    <property type="evidence" value="ECO:0007669"/>
    <property type="project" value="UniProtKB-KW"/>
</dbReference>
<dbReference type="GO" id="GO:0055036">
    <property type="term" value="C:virion membrane"/>
    <property type="evidence" value="ECO:0007669"/>
    <property type="project" value="UniProtKB-SubCell"/>
</dbReference>
<dbReference type="GO" id="GO:0003723">
    <property type="term" value="F:RNA binding"/>
    <property type="evidence" value="ECO:0007669"/>
    <property type="project" value="UniProtKB-KW"/>
</dbReference>
<dbReference type="GO" id="GO:0005198">
    <property type="term" value="F:structural molecule activity"/>
    <property type="evidence" value="ECO:0007669"/>
    <property type="project" value="InterPro"/>
</dbReference>
<dbReference type="GO" id="GO:0008270">
    <property type="term" value="F:zinc ion binding"/>
    <property type="evidence" value="ECO:0007669"/>
    <property type="project" value="UniProtKB-KW"/>
</dbReference>
<dbReference type="GO" id="GO:0039702">
    <property type="term" value="P:viral budding via host ESCRT complex"/>
    <property type="evidence" value="ECO:0007669"/>
    <property type="project" value="UniProtKB-KW"/>
</dbReference>
<dbReference type="GO" id="GO:0075523">
    <property type="term" value="P:viral translational frameshifting"/>
    <property type="evidence" value="ECO:0007669"/>
    <property type="project" value="UniProtKB-KW"/>
</dbReference>
<dbReference type="FunFam" id="1.10.1200.30:FF:000001">
    <property type="entry name" value="Gag polyprotein"/>
    <property type="match status" value="1"/>
</dbReference>
<dbReference type="FunFam" id="1.10.375.10:FF:000001">
    <property type="entry name" value="Gag polyprotein"/>
    <property type="match status" value="1"/>
</dbReference>
<dbReference type="FunFam" id="4.10.60.10:FF:000001">
    <property type="entry name" value="Gag polyprotein"/>
    <property type="match status" value="1"/>
</dbReference>
<dbReference type="Gene3D" id="1.10.1200.30">
    <property type="match status" value="1"/>
</dbReference>
<dbReference type="Gene3D" id="6.10.250.390">
    <property type="match status" value="1"/>
</dbReference>
<dbReference type="Gene3D" id="1.10.375.10">
    <property type="entry name" value="Human Immunodeficiency Virus Type 1 Capsid Protein"/>
    <property type="match status" value="1"/>
</dbReference>
<dbReference type="Gene3D" id="1.10.150.90">
    <property type="entry name" value="Immunodeficiency lentiviruses, gag gene matrix protein p17"/>
    <property type="match status" value="1"/>
</dbReference>
<dbReference type="Gene3D" id="1.20.5.760">
    <property type="entry name" value="Single helix bin"/>
    <property type="match status" value="1"/>
</dbReference>
<dbReference type="Gene3D" id="4.10.60.10">
    <property type="entry name" value="Zinc finger, CCHC-type"/>
    <property type="match status" value="1"/>
</dbReference>
<dbReference type="InterPro" id="IPR045345">
    <property type="entry name" value="Gag_p24_C"/>
</dbReference>
<dbReference type="InterPro" id="IPR014817">
    <property type="entry name" value="Gag_p6"/>
</dbReference>
<dbReference type="InterPro" id="IPR000071">
    <property type="entry name" value="Lentvrl_matrix_N"/>
</dbReference>
<dbReference type="InterPro" id="IPR012344">
    <property type="entry name" value="Matrix_HIV/RSV_N"/>
</dbReference>
<dbReference type="InterPro" id="IPR050195">
    <property type="entry name" value="Primate_lentivir_Gag_pol-like"/>
</dbReference>
<dbReference type="InterPro" id="IPR008916">
    <property type="entry name" value="Retrov_capsid_C"/>
</dbReference>
<dbReference type="InterPro" id="IPR008919">
    <property type="entry name" value="Retrov_capsid_N"/>
</dbReference>
<dbReference type="InterPro" id="IPR010999">
    <property type="entry name" value="Retrovr_matrix"/>
</dbReference>
<dbReference type="InterPro" id="IPR001878">
    <property type="entry name" value="Znf_CCHC"/>
</dbReference>
<dbReference type="InterPro" id="IPR036875">
    <property type="entry name" value="Znf_CCHC_sf"/>
</dbReference>
<dbReference type="PANTHER" id="PTHR40389:SF4">
    <property type="match status" value="1"/>
</dbReference>
<dbReference type="PANTHER" id="PTHR40389">
    <property type="entry name" value="ENDOGENOUS RETROVIRUS GROUP K MEMBER 24 GAG POLYPROTEIN-RELATED"/>
    <property type="match status" value="1"/>
</dbReference>
<dbReference type="Pfam" id="PF00540">
    <property type="entry name" value="Gag_p17"/>
    <property type="match status" value="1"/>
</dbReference>
<dbReference type="Pfam" id="PF19317">
    <property type="entry name" value="Gag_p24_C"/>
    <property type="match status" value="1"/>
</dbReference>
<dbReference type="Pfam" id="PF08705">
    <property type="entry name" value="Gag_p6"/>
    <property type="match status" value="1"/>
</dbReference>
<dbReference type="Pfam" id="PF00098">
    <property type="entry name" value="zf-CCHC"/>
    <property type="match status" value="2"/>
</dbReference>
<dbReference type="PRINTS" id="PR00234">
    <property type="entry name" value="HIV1MATRIX"/>
</dbReference>
<dbReference type="SMART" id="SM00343">
    <property type="entry name" value="ZnF_C2HC"/>
    <property type="match status" value="2"/>
</dbReference>
<dbReference type="SUPFAM" id="SSF47836">
    <property type="entry name" value="Retroviral matrix proteins"/>
    <property type="match status" value="1"/>
</dbReference>
<dbReference type="SUPFAM" id="SSF47353">
    <property type="entry name" value="Retrovirus capsid dimerization domain-like"/>
    <property type="match status" value="1"/>
</dbReference>
<dbReference type="SUPFAM" id="SSF47943">
    <property type="entry name" value="Retrovirus capsid protein, N-terminal core domain"/>
    <property type="match status" value="1"/>
</dbReference>
<dbReference type="SUPFAM" id="SSF57756">
    <property type="entry name" value="Retrovirus zinc finger-like domains"/>
    <property type="match status" value="1"/>
</dbReference>
<dbReference type="PROSITE" id="PS50158">
    <property type="entry name" value="ZF_CCHC"/>
    <property type="match status" value="2"/>
</dbReference>
<evidence type="ECO:0000250" key="1"/>
<evidence type="ECO:0000250" key="2">
    <source>
        <dbReference type="UniProtKB" id="P03347"/>
    </source>
</evidence>
<evidence type="ECO:0000250" key="3">
    <source>
        <dbReference type="UniProtKB" id="P03348"/>
    </source>
</evidence>
<evidence type="ECO:0000250" key="4">
    <source>
        <dbReference type="UniProtKB" id="P03349"/>
    </source>
</evidence>
<evidence type="ECO:0000250" key="5">
    <source>
        <dbReference type="UniProtKB" id="P04591"/>
    </source>
</evidence>
<evidence type="ECO:0000250" key="6">
    <source>
        <dbReference type="UniProtKB" id="P12493"/>
    </source>
</evidence>
<evidence type="ECO:0000250" key="7">
    <source>
        <dbReference type="UniProtKB" id="P12497"/>
    </source>
</evidence>
<evidence type="ECO:0000255" key="8">
    <source>
        <dbReference type="PROSITE-ProRule" id="PRU00047"/>
    </source>
</evidence>
<evidence type="ECO:0000256" key="9">
    <source>
        <dbReference type="SAM" id="MobiDB-lite"/>
    </source>
</evidence>
<evidence type="ECO:0000305" key="10"/>
<reference key="1">
    <citation type="journal article" date="1999" name="AIDS Res. Hum. Retroviruses">
        <title>Virtually full-length sequences of HIV type 1 subtype J reference strains.</title>
        <authorList>
            <person name="Laukkanen T."/>
            <person name="Albert J."/>
            <person name="Liitsola K."/>
            <person name="Green S.D."/>
            <person name="Carr J.K."/>
            <person name="Leitner T."/>
            <person name="McCutchan F.E."/>
            <person name="Salminen M.O."/>
        </authorList>
    </citation>
    <scope>NUCLEOTIDE SEQUENCE [GENOMIC DNA]</scope>
</reference>
<name>GAG_HV1S2</name>
<comment type="function">
    <molecule>Gag polyprotein</molecule>
    <text evidence="5">Mediates, with Gag-Pol polyprotein, the essential events in virion assembly, including binding the plasma membrane, making the protein-protein interactions necessary to create spherical particles, recruiting the viral Env proteins, and packaging the genomic RNA via direct interactions with the RNA packaging sequence (Psi).</text>
</comment>
<comment type="function">
    <molecule>Matrix protein p17</molecule>
    <text evidence="1 6">Targets the polyprotein to the plasma membrane via a multipartite membrane-binding signal, that includes its myristoylated N-terminus (By similarity). Matrix protein is part of the pre-integration complex. Implicated in the release from host cell mediated by Vpu. Binds to RNA (By similarity).</text>
</comment>
<comment type="function">
    <molecule>Capsid protein p24</molecule>
    <text evidence="5 6">Forms the conical core that encapsulates the genomic RNA-nucleocapsid complex in the virion. Most core are conical, with only 7% tubular. The core is constituted by capsid protein hexamer subunits. The core is disassembled soon after virion entry (By similarity). The capsid promotes immune invasion by cloaking viral DNA from CGAS detection (By similarity). Host restriction factors such as TRIM5-alpha or TRIMCyp bind retroviral capsids and cause premature capsid disassembly, leading to blocks in reverse transcription. Capsid restriction by TRIM5 is one of the factors which restricts HIV-1 to the human species. Host PIN1 apparently facilitates the virion uncoating (By similarity). On the other hand, interactions with PDZD8 or CYPA stabilize the capsid (By similarity).</text>
</comment>
<comment type="function">
    <molecule>Nucleocapsid protein p7</molecule>
    <text evidence="5">Encapsulates and protects viral dimeric unspliced genomic RNA (gRNA). Binds these RNAs through its zinc fingers. Acts as a nucleic acid chaperone which is involved in rearangement of nucleic acid secondary structure during gRNA retrotranscription. Also facilitates template switch leading to recombination. As part of the polyprotein, participates in gRNA dimerization, packaging, tRNA incorporation and virion assembly.</text>
</comment>
<comment type="function">
    <molecule>p6-gag</molecule>
    <text evidence="6">Plays a role in budding of the assembled particle by interacting with the host class E VPS proteins TSG101 and PDCD6IP/AIP1.</text>
</comment>
<comment type="subunit">
    <molecule>Gag polyprotein</molecule>
    <text evidence="4 5">Homotrimer; further assembles as hexamers of trimers. Oligomerization possibly creates a central hole into which the cytoplasmic tail of the gp41 envelope protein may be inserted. Interacts with host TRIM22; this interaction seems to disrupt proper trafficking of Gag polyprotein and may interfere with budding. Interacts with host PDZD8. When ubiquitinated, interacts (via p6-gag domain) with host PACSIN2; this interaction allows PACSIN2 recruitment to viral assembly sites and its subsequent incorporation into virions. Interacts with MOV10 (By similarity).</text>
</comment>
<comment type="subunit">
    <molecule>Matrix protein p17</molecule>
    <text evidence="5 6">Homotrimer; further assembles as hexamers of trimers. Interacts with gp41 (via C-terminus). Interacts with host CALM1; this interaction induces a conformational change in the Matrix protein, triggering exposure of the myristate group. Interacts with host AP3D1; this interaction allows the polyprotein trafficking to multivesicular bodies during virus assembly. Part of the pre-integration complex (PIC) which is composed of viral genome, matrix protein, Vpr and integrase.</text>
</comment>
<comment type="subunit">
    <molecule>Capsid protein p24</molecule>
    <text evidence="5 6">Homodimer; the homodimer further multimerizes as homohexamers or homopentamers (By similarity). Interacts with host NUP98 (By similarity). Interacts with host PPIA/CYPA; this interaction stabilizes the capsid (By similarity). Interacts with host NUP153 (By similarity). Interacts with host PDZD8; this interaction stabilizes the capsid. Interacts with host TRIM5; this interaction destabilizes the capsid (By similarity). Interacts with host CPSF6 (By similarity). Interacts with host NONO; the interaction is weak (By similarity).</text>
</comment>
<comment type="subunit">
    <molecule>Nucleocapsid protein p7</molecule>
    <text evidence="6">Interacts with host NUP98.</text>
</comment>
<comment type="subunit">
    <molecule>p6-gag</molecule>
    <text evidence="3 6">Interacts with Vpr; this interaction allows Vpr incorporation into the virion. Interacts with host TSG101. p6-gag interacts with host PDCD6IP/AIP1.</text>
</comment>
<comment type="subcellular location">
    <molecule>Gag polyprotein</molecule>
    <subcellularLocation>
        <location evidence="6">Host cell membrane</location>
        <topology evidence="6">Lipid-anchor</topology>
    </subcellularLocation>
    <subcellularLocation>
        <location evidence="6">Host endosome</location>
        <location evidence="6">Host multivesicular body</location>
    </subcellularLocation>
    <text evidence="6">These locations are probably linked to virus assembly sites. The main location is the cell membrane, but under some circumstances, late endosomal compartments can serve as productive sites for virion assembly.</text>
</comment>
<comment type="subcellular location">
    <molecule>Matrix protein p17</molecule>
    <subcellularLocation>
        <location evidence="6">Virion membrane</location>
        <topology evidence="6">Lipid-anchor</topology>
    </subcellularLocation>
    <subcellularLocation>
        <location evidence="1">Host nucleus</location>
    </subcellularLocation>
    <subcellularLocation>
        <location evidence="1">Host cytoplasm</location>
    </subcellularLocation>
</comment>
<comment type="subcellular location">
    <molecule>Capsid protein p24</molecule>
    <subcellularLocation>
        <location evidence="6">Virion</location>
    </subcellularLocation>
</comment>
<comment type="subcellular location">
    <molecule>Nucleocapsid protein p7</molecule>
    <subcellularLocation>
        <location evidence="6">Virion</location>
    </subcellularLocation>
</comment>
<comment type="alternative products">
    <event type="ribosomal frameshifting"/>
    <isoform>
        <id>Q9WC53-1</id>
        <name>Gag polyprotein</name>
        <sequence type="displayed"/>
    </isoform>
    <isoform>
        <id>Q9WC54-1</id>
        <name>Gag-Pol polyprotein</name>
        <sequence type="external"/>
    </isoform>
    <text>Translation results in the formation of the Gag polyprotein most of the time. Ribosomal frameshifting at the gag-pol genes boundary occurs at low frequency and produces the Gag-Pol polyprotein. This strategy of translation probably allows the virus to modulate the quantity of each viral protein. Maintenance of a correct Gag to Gag-Pol ratio is essential for RNA dimerization and viral infectivity.</text>
</comment>
<comment type="domain">
    <text evidence="6">Late-budding domains (L domains) are short sequence motifs essential for viral particle budding. They recruit proteins of the host ESCRT machinery (Endosomal Sorting Complex Required for Transport) or ESCRT-associated proteins. p6-gag contains two L domains: a PTAP/PSAP motif, which interacts with the UEV domain of TSG101 and a LYPX(n)L motif which interacts with PDCD6IP/AIP1.</text>
</comment>
<comment type="PTM">
    <text evidence="6">Gag-Pol polyprotein: Specific enzymatic cleavages by the viral protease yield mature proteins.</text>
</comment>
<comment type="PTM">
    <molecule>Matrix protein p17</molecule>
    <text evidence="5">Tyrosine phosphorylated presumably in the virion by a host kinase. Phosphorylation is apparently not a major regulator of membrane association.</text>
</comment>
<comment type="PTM">
    <text evidence="6">Capsid protein p24 is phosphorylated possibly by host MAPK1; this phosphorylation is necessary for Pin1-mediated virion uncoating.</text>
</comment>
<comment type="PTM">
    <text evidence="2">Nucleocapsid protein p7 is methylated by host PRMT6, impairing its function by reducing RNA annealing and the initiation of reverse transcription.</text>
</comment>
<comment type="miscellaneous">
    <text>HIV-1 lineages are divided in three main groups, M (for Major), O (for Outlier), and N (for New, or Non-M, Non-O). The vast majority of strains found worldwide belong to the group M. Group O seems to be endemic to and largely confined to Cameroon and neighboring countries in West Central Africa, where these viruses represent a small minority of HIV-1 strains. The group N is represented by a limited number of isolates from Cameroonian persons. The group M is further subdivided in 9 clades or subtypes (A to D, F to H, J and K).</text>
</comment>
<comment type="miscellaneous">
    <molecule>Isoform Gag polyprotein</molecule>
    <text>Produced by conventional translation.</text>
</comment>
<comment type="similarity">
    <text evidence="10">Belongs to the primate lentivirus group gag polyprotein family.</text>
</comment>
<keyword id="KW-0014">AIDS</keyword>
<keyword id="KW-0167">Capsid protein</keyword>
<keyword id="KW-1032">Host cell membrane</keyword>
<keyword id="KW-1035">Host cytoplasm</keyword>
<keyword id="KW-1039">Host endosome</keyword>
<keyword id="KW-1043">Host membrane</keyword>
<keyword id="KW-1048">Host nucleus</keyword>
<keyword id="KW-0945">Host-virus interaction</keyword>
<keyword id="KW-0449">Lipoprotein</keyword>
<keyword id="KW-0472">Membrane</keyword>
<keyword id="KW-0479">Metal-binding</keyword>
<keyword id="KW-0488">Methylation</keyword>
<keyword id="KW-0519">Myristate</keyword>
<keyword id="KW-0597">Phosphoprotein</keyword>
<keyword id="KW-0677">Repeat</keyword>
<keyword id="KW-0688">Ribosomal frameshifting</keyword>
<keyword id="KW-0694">RNA-binding</keyword>
<keyword id="KW-1198">Viral budding</keyword>
<keyword id="KW-1187">Viral budding via the host ESCRT complexes</keyword>
<keyword id="KW-0543">Viral nucleoprotein</keyword>
<keyword id="KW-1188">Viral release from host cell</keyword>
<keyword id="KW-0946">Virion</keyword>
<keyword id="KW-0862">Zinc</keyword>
<keyword id="KW-0863">Zinc-finger</keyword>
<accession>Q9WC53</accession>